<sequence>MVFEGHLVGTGLKVGVVVGRFNEFITSKLLGGALDGLKRHGVEENDIDVAWVPGAFEIPLIAKKMANSGKYDAVITLGTVIRGATTHYDYVCNEVAKGVASLSLQTDIPVIFGVLTTETIEQAIERAGTKAGNKGYESAVAAIEMAHLSKHWA</sequence>
<name>RISB_BACAA</name>
<proteinExistence type="inferred from homology"/>
<accession>C3P7P8</accession>
<feature type="chain" id="PRO_1000195455" description="6,7-dimethyl-8-ribityllumazine synthase">
    <location>
        <begin position="1"/>
        <end position="153"/>
    </location>
</feature>
<feature type="active site" description="Proton donor" evidence="1">
    <location>
        <position position="87"/>
    </location>
</feature>
<feature type="binding site" evidence="1">
    <location>
        <position position="21"/>
    </location>
    <ligand>
        <name>5-amino-6-(D-ribitylamino)uracil</name>
        <dbReference type="ChEBI" id="CHEBI:15934"/>
    </ligand>
</feature>
<feature type="binding site" evidence="1">
    <location>
        <begin position="55"/>
        <end position="57"/>
    </location>
    <ligand>
        <name>5-amino-6-(D-ribitylamino)uracil</name>
        <dbReference type="ChEBI" id="CHEBI:15934"/>
    </ligand>
</feature>
<feature type="binding site" evidence="1">
    <location>
        <begin position="79"/>
        <end position="81"/>
    </location>
    <ligand>
        <name>5-amino-6-(D-ribitylamino)uracil</name>
        <dbReference type="ChEBI" id="CHEBI:15934"/>
    </ligand>
</feature>
<feature type="binding site" evidence="1">
    <location>
        <begin position="84"/>
        <end position="85"/>
    </location>
    <ligand>
        <name>(2S)-2-hydroxy-3-oxobutyl phosphate</name>
        <dbReference type="ChEBI" id="CHEBI:58830"/>
    </ligand>
</feature>
<feature type="binding site" evidence="1">
    <location>
        <position position="112"/>
    </location>
    <ligand>
        <name>5-amino-6-(D-ribitylamino)uracil</name>
        <dbReference type="ChEBI" id="CHEBI:15934"/>
    </ligand>
</feature>
<feature type="binding site" evidence="1">
    <location>
        <position position="126"/>
    </location>
    <ligand>
        <name>(2S)-2-hydroxy-3-oxobutyl phosphate</name>
        <dbReference type="ChEBI" id="CHEBI:58830"/>
    </ligand>
</feature>
<dbReference type="EC" id="2.5.1.78" evidence="1"/>
<dbReference type="EMBL" id="CP001598">
    <property type="protein sequence ID" value="ACQ50688.1"/>
    <property type="molecule type" value="Genomic_DNA"/>
</dbReference>
<dbReference type="RefSeq" id="WP_000230891.1">
    <property type="nucleotide sequence ID" value="NC_012659.1"/>
</dbReference>
<dbReference type="SMR" id="C3P7P8"/>
<dbReference type="GeneID" id="45024001"/>
<dbReference type="KEGG" id="bai:BAA_4357"/>
<dbReference type="HOGENOM" id="CLU_089358_1_1_9"/>
<dbReference type="UniPathway" id="UPA00275">
    <property type="reaction ID" value="UER00404"/>
</dbReference>
<dbReference type="GO" id="GO:0005829">
    <property type="term" value="C:cytosol"/>
    <property type="evidence" value="ECO:0007669"/>
    <property type="project" value="TreeGrafter"/>
</dbReference>
<dbReference type="GO" id="GO:0009349">
    <property type="term" value="C:riboflavin synthase complex"/>
    <property type="evidence" value="ECO:0007669"/>
    <property type="project" value="InterPro"/>
</dbReference>
<dbReference type="GO" id="GO:0000906">
    <property type="term" value="F:6,7-dimethyl-8-ribityllumazine synthase activity"/>
    <property type="evidence" value="ECO:0007669"/>
    <property type="project" value="UniProtKB-UniRule"/>
</dbReference>
<dbReference type="GO" id="GO:0009231">
    <property type="term" value="P:riboflavin biosynthetic process"/>
    <property type="evidence" value="ECO:0007669"/>
    <property type="project" value="UniProtKB-UniRule"/>
</dbReference>
<dbReference type="CDD" id="cd09209">
    <property type="entry name" value="Lumazine_synthase-I"/>
    <property type="match status" value="1"/>
</dbReference>
<dbReference type="FunFam" id="3.40.50.960:FF:000001">
    <property type="entry name" value="6,7-dimethyl-8-ribityllumazine synthase"/>
    <property type="match status" value="1"/>
</dbReference>
<dbReference type="Gene3D" id="3.40.50.960">
    <property type="entry name" value="Lumazine/riboflavin synthase"/>
    <property type="match status" value="1"/>
</dbReference>
<dbReference type="HAMAP" id="MF_00178">
    <property type="entry name" value="Lumazine_synth"/>
    <property type="match status" value="1"/>
</dbReference>
<dbReference type="InterPro" id="IPR034964">
    <property type="entry name" value="LS"/>
</dbReference>
<dbReference type="InterPro" id="IPR002180">
    <property type="entry name" value="LS/RS"/>
</dbReference>
<dbReference type="InterPro" id="IPR036467">
    <property type="entry name" value="LS/RS_sf"/>
</dbReference>
<dbReference type="NCBIfam" id="TIGR00114">
    <property type="entry name" value="lumazine-synth"/>
    <property type="match status" value="1"/>
</dbReference>
<dbReference type="NCBIfam" id="NF000812">
    <property type="entry name" value="PRK00061.1-4"/>
    <property type="match status" value="1"/>
</dbReference>
<dbReference type="PANTHER" id="PTHR21058:SF0">
    <property type="entry name" value="6,7-DIMETHYL-8-RIBITYLLUMAZINE SYNTHASE"/>
    <property type="match status" value="1"/>
</dbReference>
<dbReference type="PANTHER" id="PTHR21058">
    <property type="entry name" value="6,7-DIMETHYL-8-RIBITYLLUMAZINE SYNTHASE DMRL SYNTHASE LUMAZINE SYNTHASE"/>
    <property type="match status" value="1"/>
</dbReference>
<dbReference type="Pfam" id="PF00885">
    <property type="entry name" value="DMRL_synthase"/>
    <property type="match status" value="1"/>
</dbReference>
<dbReference type="SUPFAM" id="SSF52121">
    <property type="entry name" value="Lumazine synthase"/>
    <property type="match status" value="1"/>
</dbReference>
<reference key="1">
    <citation type="submission" date="2009-04" db="EMBL/GenBank/DDBJ databases">
        <title>Genome sequence of Bacillus anthracis A0248.</title>
        <authorList>
            <person name="Dodson R.J."/>
            <person name="Munk A.C."/>
            <person name="Bruce D."/>
            <person name="Detter C."/>
            <person name="Tapia R."/>
            <person name="Sutton G."/>
            <person name="Sims D."/>
            <person name="Brettin T."/>
        </authorList>
    </citation>
    <scope>NUCLEOTIDE SEQUENCE [LARGE SCALE GENOMIC DNA]</scope>
    <source>
        <strain>A0248</strain>
    </source>
</reference>
<organism>
    <name type="scientific">Bacillus anthracis (strain A0248)</name>
    <dbReference type="NCBI Taxonomy" id="592021"/>
    <lineage>
        <taxon>Bacteria</taxon>
        <taxon>Bacillati</taxon>
        <taxon>Bacillota</taxon>
        <taxon>Bacilli</taxon>
        <taxon>Bacillales</taxon>
        <taxon>Bacillaceae</taxon>
        <taxon>Bacillus</taxon>
        <taxon>Bacillus cereus group</taxon>
    </lineage>
</organism>
<gene>
    <name evidence="1" type="primary">ribH</name>
    <name type="ordered locus">BAA_4357</name>
</gene>
<keyword id="KW-0686">Riboflavin biosynthesis</keyword>
<keyword id="KW-0808">Transferase</keyword>
<comment type="function">
    <text evidence="1">Catalyzes the formation of 6,7-dimethyl-8-ribityllumazine by condensation of 5-amino-6-(D-ribitylamino)uracil with 3,4-dihydroxy-2-butanone 4-phosphate. This is the penultimate step in the biosynthesis of riboflavin.</text>
</comment>
<comment type="catalytic activity">
    <reaction evidence="1">
        <text>(2S)-2-hydroxy-3-oxobutyl phosphate + 5-amino-6-(D-ribitylamino)uracil = 6,7-dimethyl-8-(1-D-ribityl)lumazine + phosphate + 2 H2O + H(+)</text>
        <dbReference type="Rhea" id="RHEA:26152"/>
        <dbReference type="ChEBI" id="CHEBI:15377"/>
        <dbReference type="ChEBI" id="CHEBI:15378"/>
        <dbReference type="ChEBI" id="CHEBI:15934"/>
        <dbReference type="ChEBI" id="CHEBI:43474"/>
        <dbReference type="ChEBI" id="CHEBI:58201"/>
        <dbReference type="ChEBI" id="CHEBI:58830"/>
        <dbReference type="EC" id="2.5.1.78"/>
    </reaction>
</comment>
<comment type="pathway">
    <text evidence="1">Cofactor biosynthesis; riboflavin biosynthesis; riboflavin from 2-hydroxy-3-oxobutyl phosphate and 5-amino-6-(D-ribitylamino)uracil: step 1/2.</text>
</comment>
<comment type="subunit">
    <text evidence="1">Forms an icosahedral capsid composed of 60 subunits, arranged as a dodecamer of pentamers.</text>
</comment>
<comment type="similarity">
    <text evidence="1">Belongs to the DMRL synthase family.</text>
</comment>
<protein>
    <recommendedName>
        <fullName evidence="1">6,7-dimethyl-8-ribityllumazine synthase</fullName>
        <shortName evidence="1">DMRL synthase</shortName>
        <shortName evidence="1">LS</shortName>
        <shortName evidence="1">Lumazine synthase</shortName>
        <ecNumber evidence="1">2.5.1.78</ecNumber>
    </recommendedName>
</protein>
<evidence type="ECO:0000255" key="1">
    <source>
        <dbReference type="HAMAP-Rule" id="MF_00178"/>
    </source>
</evidence>